<name>HEM3_BACAN</name>
<dbReference type="EC" id="2.5.1.61" evidence="1"/>
<dbReference type="EMBL" id="AE016879">
    <property type="protein sequence ID" value="AAP28395.1"/>
    <property type="molecule type" value="Genomic_DNA"/>
</dbReference>
<dbReference type="EMBL" id="AE017334">
    <property type="protein sequence ID" value="AAT33819.1"/>
    <property type="molecule type" value="Genomic_DNA"/>
</dbReference>
<dbReference type="EMBL" id="AE017225">
    <property type="protein sequence ID" value="AAT56659.1"/>
    <property type="molecule type" value="Genomic_DNA"/>
</dbReference>
<dbReference type="RefSeq" id="NP_846909.1">
    <property type="nucleotide sequence ID" value="NC_003997.3"/>
</dbReference>
<dbReference type="RefSeq" id="WP_001226429.1">
    <property type="nucleotide sequence ID" value="NZ_WXXJ01000027.1"/>
</dbReference>
<dbReference type="RefSeq" id="YP_030608.1">
    <property type="nucleotide sequence ID" value="NC_005945.1"/>
</dbReference>
<dbReference type="SMR" id="Q81LC7"/>
<dbReference type="IntAct" id="Q81LC7">
    <property type="interactions" value="7"/>
</dbReference>
<dbReference type="STRING" id="261594.GBAA_4696"/>
<dbReference type="DNASU" id="1083703"/>
<dbReference type="GeneID" id="45024336"/>
<dbReference type="KEGG" id="ban:BA_4696"/>
<dbReference type="KEGG" id="bar:GBAA_4696"/>
<dbReference type="KEGG" id="bat:BAS4361"/>
<dbReference type="PATRIC" id="fig|198094.11.peg.4661"/>
<dbReference type="eggNOG" id="COG0181">
    <property type="taxonomic scope" value="Bacteria"/>
</dbReference>
<dbReference type="HOGENOM" id="CLU_019704_0_2_9"/>
<dbReference type="OMA" id="LWQANHI"/>
<dbReference type="OrthoDB" id="9810298at2"/>
<dbReference type="UniPathway" id="UPA00251">
    <property type="reaction ID" value="UER00319"/>
</dbReference>
<dbReference type="Proteomes" id="UP000000427">
    <property type="component" value="Chromosome"/>
</dbReference>
<dbReference type="Proteomes" id="UP000000594">
    <property type="component" value="Chromosome"/>
</dbReference>
<dbReference type="GO" id="GO:0005737">
    <property type="term" value="C:cytoplasm"/>
    <property type="evidence" value="ECO:0007669"/>
    <property type="project" value="TreeGrafter"/>
</dbReference>
<dbReference type="GO" id="GO:0004418">
    <property type="term" value="F:hydroxymethylbilane synthase activity"/>
    <property type="evidence" value="ECO:0007669"/>
    <property type="project" value="UniProtKB-UniRule"/>
</dbReference>
<dbReference type="GO" id="GO:0006782">
    <property type="term" value="P:protoporphyrinogen IX biosynthetic process"/>
    <property type="evidence" value="ECO:0007669"/>
    <property type="project" value="UniProtKB-UniRule"/>
</dbReference>
<dbReference type="CDD" id="cd13646">
    <property type="entry name" value="PBP2_EcHMBS_like"/>
    <property type="match status" value="1"/>
</dbReference>
<dbReference type="FunFam" id="3.30.160.40:FF:000001">
    <property type="entry name" value="Porphobilinogen deaminase"/>
    <property type="match status" value="1"/>
</dbReference>
<dbReference type="FunFam" id="3.40.190.10:FF:000004">
    <property type="entry name" value="Porphobilinogen deaminase"/>
    <property type="match status" value="1"/>
</dbReference>
<dbReference type="FunFam" id="3.40.190.10:FF:000005">
    <property type="entry name" value="Porphobilinogen deaminase"/>
    <property type="match status" value="1"/>
</dbReference>
<dbReference type="Gene3D" id="3.40.190.10">
    <property type="entry name" value="Periplasmic binding protein-like II"/>
    <property type="match status" value="2"/>
</dbReference>
<dbReference type="Gene3D" id="3.30.160.40">
    <property type="entry name" value="Porphobilinogen deaminase, C-terminal domain"/>
    <property type="match status" value="1"/>
</dbReference>
<dbReference type="HAMAP" id="MF_00260">
    <property type="entry name" value="Porphobil_deam"/>
    <property type="match status" value="1"/>
</dbReference>
<dbReference type="InterPro" id="IPR000860">
    <property type="entry name" value="HemC"/>
</dbReference>
<dbReference type="InterPro" id="IPR022419">
    <property type="entry name" value="Porphobilin_deaminase_cofac_BS"/>
</dbReference>
<dbReference type="InterPro" id="IPR022417">
    <property type="entry name" value="Porphobilin_deaminase_N"/>
</dbReference>
<dbReference type="InterPro" id="IPR022418">
    <property type="entry name" value="Porphobilinogen_deaminase_C"/>
</dbReference>
<dbReference type="InterPro" id="IPR036803">
    <property type="entry name" value="Porphobilinogen_deaminase_C_sf"/>
</dbReference>
<dbReference type="NCBIfam" id="TIGR00212">
    <property type="entry name" value="hemC"/>
    <property type="match status" value="1"/>
</dbReference>
<dbReference type="PANTHER" id="PTHR11557">
    <property type="entry name" value="PORPHOBILINOGEN DEAMINASE"/>
    <property type="match status" value="1"/>
</dbReference>
<dbReference type="PANTHER" id="PTHR11557:SF0">
    <property type="entry name" value="PORPHOBILINOGEN DEAMINASE"/>
    <property type="match status" value="1"/>
</dbReference>
<dbReference type="Pfam" id="PF01379">
    <property type="entry name" value="Porphobil_deam"/>
    <property type="match status" value="1"/>
</dbReference>
<dbReference type="Pfam" id="PF03900">
    <property type="entry name" value="Porphobil_deamC"/>
    <property type="match status" value="1"/>
</dbReference>
<dbReference type="PIRSF" id="PIRSF001438">
    <property type="entry name" value="4pyrrol_synth_OHMeBilane_synth"/>
    <property type="match status" value="1"/>
</dbReference>
<dbReference type="PRINTS" id="PR00151">
    <property type="entry name" value="PORPHBDMNASE"/>
</dbReference>
<dbReference type="SUPFAM" id="SSF53850">
    <property type="entry name" value="Periplasmic binding protein-like II"/>
    <property type="match status" value="1"/>
</dbReference>
<dbReference type="SUPFAM" id="SSF54782">
    <property type="entry name" value="Porphobilinogen deaminase (hydroxymethylbilane synthase), C-terminal domain"/>
    <property type="match status" value="1"/>
</dbReference>
<dbReference type="PROSITE" id="PS00533">
    <property type="entry name" value="PORPHOBILINOGEN_DEAM"/>
    <property type="match status" value="1"/>
</dbReference>
<reference key="1">
    <citation type="journal article" date="2003" name="Nature">
        <title>The genome sequence of Bacillus anthracis Ames and comparison to closely related bacteria.</title>
        <authorList>
            <person name="Read T.D."/>
            <person name="Peterson S.N."/>
            <person name="Tourasse N.J."/>
            <person name="Baillie L.W."/>
            <person name="Paulsen I.T."/>
            <person name="Nelson K.E."/>
            <person name="Tettelin H."/>
            <person name="Fouts D.E."/>
            <person name="Eisen J.A."/>
            <person name="Gill S.R."/>
            <person name="Holtzapple E.K."/>
            <person name="Okstad O.A."/>
            <person name="Helgason E."/>
            <person name="Rilstone J."/>
            <person name="Wu M."/>
            <person name="Kolonay J.F."/>
            <person name="Beanan M.J."/>
            <person name="Dodson R.J."/>
            <person name="Brinkac L.M."/>
            <person name="Gwinn M.L."/>
            <person name="DeBoy R.T."/>
            <person name="Madpu R."/>
            <person name="Daugherty S.C."/>
            <person name="Durkin A.S."/>
            <person name="Haft D.H."/>
            <person name="Nelson W.C."/>
            <person name="Peterson J.D."/>
            <person name="Pop M."/>
            <person name="Khouri H.M."/>
            <person name="Radune D."/>
            <person name="Benton J.L."/>
            <person name="Mahamoud Y."/>
            <person name="Jiang L."/>
            <person name="Hance I.R."/>
            <person name="Weidman J.F."/>
            <person name="Berry K.J."/>
            <person name="Plaut R.D."/>
            <person name="Wolf A.M."/>
            <person name="Watkins K.L."/>
            <person name="Nierman W.C."/>
            <person name="Hazen A."/>
            <person name="Cline R.T."/>
            <person name="Redmond C."/>
            <person name="Thwaite J.E."/>
            <person name="White O."/>
            <person name="Salzberg S.L."/>
            <person name="Thomason B."/>
            <person name="Friedlander A.M."/>
            <person name="Koehler T.M."/>
            <person name="Hanna P.C."/>
            <person name="Kolstoe A.-B."/>
            <person name="Fraser C.M."/>
        </authorList>
    </citation>
    <scope>NUCLEOTIDE SEQUENCE [LARGE SCALE GENOMIC DNA]</scope>
    <source>
        <strain>Ames / isolate Porton</strain>
    </source>
</reference>
<reference key="2">
    <citation type="journal article" date="2009" name="J. Bacteriol.">
        <title>The complete genome sequence of Bacillus anthracis Ames 'Ancestor'.</title>
        <authorList>
            <person name="Ravel J."/>
            <person name="Jiang L."/>
            <person name="Stanley S.T."/>
            <person name="Wilson M.R."/>
            <person name="Decker R.S."/>
            <person name="Read T.D."/>
            <person name="Worsham P."/>
            <person name="Keim P.S."/>
            <person name="Salzberg S.L."/>
            <person name="Fraser-Liggett C.M."/>
            <person name="Rasko D.A."/>
        </authorList>
    </citation>
    <scope>NUCLEOTIDE SEQUENCE [LARGE SCALE GENOMIC DNA]</scope>
    <source>
        <strain>Ames ancestor</strain>
    </source>
</reference>
<reference key="3">
    <citation type="submission" date="2004-01" db="EMBL/GenBank/DDBJ databases">
        <title>Complete genome sequence of Bacillus anthracis Sterne.</title>
        <authorList>
            <person name="Brettin T.S."/>
            <person name="Bruce D."/>
            <person name="Challacombe J.F."/>
            <person name="Gilna P."/>
            <person name="Han C."/>
            <person name="Hill K."/>
            <person name="Hitchcock P."/>
            <person name="Jackson P."/>
            <person name="Keim P."/>
            <person name="Longmire J."/>
            <person name="Lucas S."/>
            <person name="Okinaka R."/>
            <person name="Richardson P."/>
            <person name="Rubin E."/>
            <person name="Tice H."/>
        </authorList>
    </citation>
    <scope>NUCLEOTIDE SEQUENCE [LARGE SCALE GENOMIC DNA]</scope>
    <source>
        <strain>Sterne</strain>
    </source>
</reference>
<accession>Q81LC7</accession>
<accession>Q6HST0</accession>
<accession>Q6KM23</accession>
<proteinExistence type="inferred from homology"/>
<organism>
    <name type="scientific">Bacillus anthracis</name>
    <dbReference type="NCBI Taxonomy" id="1392"/>
    <lineage>
        <taxon>Bacteria</taxon>
        <taxon>Bacillati</taxon>
        <taxon>Bacillota</taxon>
        <taxon>Bacilli</taxon>
        <taxon>Bacillales</taxon>
        <taxon>Bacillaceae</taxon>
        <taxon>Bacillus</taxon>
        <taxon>Bacillus cereus group</taxon>
    </lineage>
</organism>
<protein>
    <recommendedName>
        <fullName evidence="1">Porphobilinogen deaminase</fullName>
        <shortName evidence="1">PBG</shortName>
        <ecNumber evidence="1">2.5.1.61</ecNumber>
    </recommendedName>
    <alternativeName>
        <fullName evidence="1">Hydroxymethylbilane synthase</fullName>
        <shortName evidence="1">HMBS</shortName>
    </alternativeName>
    <alternativeName>
        <fullName evidence="1">Pre-uroporphyrinogen synthase</fullName>
    </alternativeName>
</protein>
<feature type="chain" id="PRO_0000142903" description="Porphobilinogen deaminase">
    <location>
        <begin position="1"/>
        <end position="309"/>
    </location>
</feature>
<feature type="modified residue" description="S-(dipyrrolylmethanemethyl)cysteine" evidence="1">
    <location>
        <position position="241"/>
    </location>
</feature>
<gene>
    <name evidence="1" type="primary">hemC</name>
    <name type="ordered locus">BA_4696</name>
    <name type="ordered locus">GBAA_4696</name>
    <name type="ordered locus">BAS4361</name>
</gene>
<sequence>MRKIIVGSRKSKLALTQTNWFIDQLKALGLPYEFEVKEIVTKGDVILDVTLSKVGGKGLFVKEIEHALLTKEIDMAVHSMKDMPAVLPEGLMIGCTPKRVDPRDAFISKSGASYKELAEGAILGTSSLRRSAQLLAARPDLQVKWIRGNIDTRLRKLKEEDYDAIILATAGLQRMGWDNEVITEHLDETLCVPAVGQGALAIECREDDKDLLQLLAHINDAVTEKTVAAERVFLHKLEGGCQVPIAGYATITENDAIELTALVGSMDGSVLLKETVVGTDPEKVGLEAADRLIKQGAKELILAANKGQQ</sequence>
<comment type="function">
    <text evidence="1">Tetrapolymerization of the monopyrrole PBG into the hydroxymethylbilane pre-uroporphyrinogen in several discrete steps.</text>
</comment>
<comment type="catalytic activity">
    <reaction evidence="1">
        <text>4 porphobilinogen + H2O = hydroxymethylbilane + 4 NH4(+)</text>
        <dbReference type="Rhea" id="RHEA:13185"/>
        <dbReference type="ChEBI" id="CHEBI:15377"/>
        <dbReference type="ChEBI" id="CHEBI:28938"/>
        <dbReference type="ChEBI" id="CHEBI:57845"/>
        <dbReference type="ChEBI" id="CHEBI:58126"/>
        <dbReference type="EC" id="2.5.1.61"/>
    </reaction>
</comment>
<comment type="cofactor">
    <cofactor evidence="1">
        <name>dipyrromethane</name>
        <dbReference type="ChEBI" id="CHEBI:60342"/>
    </cofactor>
    <text evidence="1">Binds 1 dipyrromethane group covalently.</text>
</comment>
<comment type="pathway">
    <text evidence="1">Porphyrin-containing compound metabolism; protoporphyrin-IX biosynthesis; coproporphyrinogen-III from 5-aminolevulinate: step 2/4.</text>
</comment>
<comment type="subunit">
    <text evidence="1">Monomer.</text>
</comment>
<comment type="miscellaneous">
    <text evidence="1">The porphobilinogen subunits are added to the dipyrromethane group.</text>
</comment>
<comment type="similarity">
    <text evidence="1">Belongs to the HMBS family.</text>
</comment>
<keyword id="KW-0627">Porphyrin biosynthesis</keyword>
<keyword id="KW-1185">Reference proteome</keyword>
<keyword id="KW-0808">Transferase</keyword>
<evidence type="ECO:0000255" key="1">
    <source>
        <dbReference type="HAMAP-Rule" id="MF_00260"/>
    </source>
</evidence>